<reference key="1">
    <citation type="submission" date="2007-03" db="EMBL/GenBank/DDBJ databases">
        <title>Complete sequence of Prosthecochloris vibrioformis DSM 265.</title>
        <authorList>
            <consortium name="US DOE Joint Genome Institute"/>
            <person name="Copeland A."/>
            <person name="Lucas S."/>
            <person name="Lapidus A."/>
            <person name="Barry K."/>
            <person name="Detter J.C."/>
            <person name="Glavina del Rio T."/>
            <person name="Hammon N."/>
            <person name="Israni S."/>
            <person name="Pitluck S."/>
            <person name="Schmutz J."/>
            <person name="Larimer F."/>
            <person name="Land M."/>
            <person name="Hauser L."/>
            <person name="Mikhailova N."/>
            <person name="Li T."/>
            <person name="Overmann J."/>
            <person name="Schuster S.C."/>
            <person name="Bryant D.A."/>
            <person name="Richardson P."/>
        </authorList>
    </citation>
    <scope>NUCLEOTIDE SEQUENCE [LARGE SCALE GENOMIC DNA]</scope>
    <source>
        <strain>DSM 265 / 1930</strain>
    </source>
</reference>
<gene>
    <name evidence="1" type="primary">tatA</name>
    <name type="ordered locus">Cvib_1401</name>
</gene>
<feature type="chain" id="PRO_1000078313" description="Sec-independent protein translocase protein TatA">
    <location>
        <begin position="1"/>
        <end position="69"/>
    </location>
</feature>
<feature type="transmembrane region" description="Helical" evidence="1">
    <location>
        <begin position="1"/>
        <end position="21"/>
    </location>
</feature>
<accession>A4SG03</accession>
<proteinExistence type="inferred from homology"/>
<name>TATA_CHLPM</name>
<sequence length="69" mass="7730">MFGLGGQELILILLIILLLFGAKKLPELAKGLGRGMKEFKKAQTEIEEEFNNAIEDTPAQKKETIKDKE</sequence>
<dbReference type="EMBL" id="CP000607">
    <property type="protein sequence ID" value="ABP37412.1"/>
    <property type="molecule type" value="Genomic_DNA"/>
</dbReference>
<dbReference type="SMR" id="A4SG03"/>
<dbReference type="STRING" id="290318.Cvib_1401"/>
<dbReference type="KEGG" id="pvi:Cvib_1401"/>
<dbReference type="eggNOG" id="COG1826">
    <property type="taxonomic scope" value="Bacteria"/>
</dbReference>
<dbReference type="HOGENOM" id="CLU_086034_6_2_10"/>
<dbReference type="OrthoDB" id="9812812at2"/>
<dbReference type="GO" id="GO:0033281">
    <property type="term" value="C:TAT protein transport complex"/>
    <property type="evidence" value="ECO:0007669"/>
    <property type="project" value="UniProtKB-UniRule"/>
</dbReference>
<dbReference type="GO" id="GO:0008320">
    <property type="term" value="F:protein transmembrane transporter activity"/>
    <property type="evidence" value="ECO:0007669"/>
    <property type="project" value="UniProtKB-UniRule"/>
</dbReference>
<dbReference type="GO" id="GO:0043953">
    <property type="term" value="P:protein transport by the Tat complex"/>
    <property type="evidence" value="ECO:0007669"/>
    <property type="project" value="UniProtKB-UniRule"/>
</dbReference>
<dbReference type="Gene3D" id="1.20.5.3310">
    <property type="match status" value="1"/>
</dbReference>
<dbReference type="HAMAP" id="MF_00236">
    <property type="entry name" value="TatA_E"/>
    <property type="match status" value="1"/>
</dbReference>
<dbReference type="InterPro" id="IPR003369">
    <property type="entry name" value="TatA/B/E"/>
</dbReference>
<dbReference type="InterPro" id="IPR006312">
    <property type="entry name" value="TatA/E"/>
</dbReference>
<dbReference type="NCBIfam" id="TIGR01411">
    <property type="entry name" value="tatAE"/>
    <property type="match status" value="1"/>
</dbReference>
<dbReference type="PANTHER" id="PTHR42982">
    <property type="entry name" value="SEC-INDEPENDENT PROTEIN TRANSLOCASE PROTEIN TATA"/>
    <property type="match status" value="1"/>
</dbReference>
<dbReference type="PANTHER" id="PTHR42982:SF1">
    <property type="entry name" value="SEC-INDEPENDENT PROTEIN TRANSLOCASE PROTEIN TATA"/>
    <property type="match status" value="1"/>
</dbReference>
<dbReference type="Pfam" id="PF02416">
    <property type="entry name" value="TatA_B_E"/>
    <property type="match status" value="1"/>
</dbReference>
<dbReference type="PRINTS" id="PR01506">
    <property type="entry name" value="TATBPROTEIN"/>
</dbReference>
<protein>
    <recommendedName>
        <fullName evidence="1">Sec-independent protein translocase protein TatA</fullName>
    </recommendedName>
</protein>
<organism>
    <name type="scientific">Chlorobium phaeovibrioides (strain DSM 265 / 1930)</name>
    <name type="common">Prosthecochloris vibrioformis (strain DSM 265)</name>
    <dbReference type="NCBI Taxonomy" id="290318"/>
    <lineage>
        <taxon>Bacteria</taxon>
        <taxon>Pseudomonadati</taxon>
        <taxon>Chlorobiota</taxon>
        <taxon>Chlorobiia</taxon>
        <taxon>Chlorobiales</taxon>
        <taxon>Chlorobiaceae</taxon>
        <taxon>Chlorobium/Pelodictyon group</taxon>
        <taxon>Chlorobium</taxon>
    </lineage>
</organism>
<comment type="function">
    <text evidence="1">Part of the twin-arginine translocation (Tat) system that transports large folded proteins containing a characteristic twin-arginine motif in their signal peptide across membranes. TatA could form the protein-conducting channel of the Tat system.</text>
</comment>
<comment type="subunit">
    <text evidence="1">Forms a complex with TatC.</text>
</comment>
<comment type="subcellular location">
    <subcellularLocation>
        <location evidence="1">Cell inner membrane</location>
        <topology evidence="1">Single-pass membrane protein</topology>
    </subcellularLocation>
</comment>
<comment type="similarity">
    <text evidence="1">Belongs to the TatA/E family.</text>
</comment>
<evidence type="ECO:0000255" key="1">
    <source>
        <dbReference type="HAMAP-Rule" id="MF_00236"/>
    </source>
</evidence>
<keyword id="KW-0997">Cell inner membrane</keyword>
<keyword id="KW-1003">Cell membrane</keyword>
<keyword id="KW-0472">Membrane</keyword>
<keyword id="KW-0653">Protein transport</keyword>
<keyword id="KW-0811">Translocation</keyword>
<keyword id="KW-0812">Transmembrane</keyword>
<keyword id="KW-1133">Transmembrane helix</keyword>
<keyword id="KW-0813">Transport</keyword>